<feature type="peptide" id="PRO_0000441010" description="Potassium channel toxin alpha-KTx 2.19" evidence="3">
    <location>
        <begin position="1"/>
        <end position="37"/>
    </location>
</feature>
<feature type="site" description="Basic residue of the functional dyad" evidence="1">
    <location>
        <position position="27"/>
    </location>
</feature>
<feature type="site" description="Aromatic residue of the functional dyad" evidence="1">
    <location>
        <position position="36"/>
    </location>
</feature>
<feature type="disulfide bond" evidence="2">
    <location>
        <begin position="7"/>
        <end position="28"/>
    </location>
</feature>
<feature type="disulfide bond" evidence="2">
    <location>
        <begin position="13"/>
        <end position="33"/>
    </location>
</feature>
<feature type="disulfide bond" evidence="2">
    <location>
        <begin position="17"/>
        <end position="35"/>
    </location>
</feature>
<protein>
    <recommendedName>
        <fullName evidence="5">Potassium channel toxin alpha-KTx 2.19</fullName>
    </recommendedName>
    <alternativeName>
        <fullName evidence="4">Peptide Rj1m2</fullName>
    </alternativeName>
    <alternativeName>
        <fullName evidence="4">Potassium channel toxin alpha-KTx 2.15</fullName>
    </alternativeName>
</protein>
<keyword id="KW-0903">Direct protein sequencing</keyword>
<keyword id="KW-1015">Disulfide bond</keyword>
<keyword id="KW-0872">Ion channel impairing toxin</keyword>
<keyword id="KW-0528">Neurotoxin</keyword>
<keyword id="KW-0632">Potassium channel impairing toxin</keyword>
<keyword id="KW-0964">Secreted</keyword>
<keyword id="KW-0800">Toxin</keyword>
<keyword id="KW-1220">Voltage-gated potassium channel impairing toxin</keyword>
<evidence type="ECO:0000250" key="1">
    <source>
        <dbReference type="UniProtKB" id="O46028"/>
    </source>
</evidence>
<evidence type="ECO:0000250" key="2">
    <source>
        <dbReference type="UniProtKB" id="P59847"/>
    </source>
</evidence>
<evidence type="ECO:0000269" key="3">
    <source>
    </source>
</evidence>
<evidence type="ECO:0000303" key="4">
    <source>
    </source>
</evidence>
<evidence type="ECO:0000303" key="5">
    <source ref="2"/>
</evidence>
<evidence type="ECO:0000305" key="6"/>
<evidence type="ECO:0000305" key="7">
    <source>
    </source>
</evidence>
<evidence type="ECO:0000305" key="8">
    <source ref="2"/>
</evidence>
<sequence length="37" mass="3951">TVIDVKCTSPKQCVPACKAAMGTVRAKCMNGKCKCYI</sequence>
<organism>
    <name type="scientific">Rhopalurus junceus</name>
    <name type="common">Caribbean blue scorpion</name>
    <dbReference type="NCBI Taxonomy" id="419285"/>
    <lineage>
        <taxon>Eukaryota</taxon>
        <taxon>Metazoa</taxon>
        <taxon>Ecdysozoa</taxon>
        <taxon>Arthropoda</taxon>
        <taxon>Chelicerata</taxon>
        <taxon>Arachnida</taxon>
        <taxon>Scorpiones</taxon>
        <taxon>Buthida</taxon>
        <taxon>Buthoidea</taxon>
        <taxon>Buthidae</taxon>
        <taxon>Rhopalurus</taxon>
    </lineage>
</organism>
<dbReference type="SMR" id="C0HJT0"/>
<dbReference type="GO" id="GO:0005576">
    <property type="term" value="C:extracellular region"/>
    <property type="evidence" value="ECO:0007669"/>
    <property type="project" value="UniProtKB-SubCell"/>
</dbReference>
<dbReference type="GO" id="GO:0008200">
    <property type="term" value="F:ion channel inhibitor activity"/>
    <property type="evidence" value="ECO:0007669"/>
    <property type="project" value="InterPro"/>
</dbReference>
<dbReference type="GO" id="GO:0015459">
    <property type="term" value="F:potassium channel regulator activity"/>
    <property type="evidence" value="ECO:0007669"/>
    <property type="project" value="UniProtKB-KW"/>
</dbReference>
<dbReference type="GO" id="GO:0090729">
    <property type="term" value="F:toxin activity"/>
    <property type="evidence" value="ECO:0007669"/>
    <property type="project" value="UniProtKB-KW"/>
</dbReference>
<dbReference type="FunFam" id="3.30.30.10:FF:000009">
    <property type="entry name" value="Potassium channel toxin alpha-KTx 4.3"/>
    <property type="match status" value="1"/>
</dbReference>
<dbReference type="Gene3D" id="3.30.30.10">
    <property type="entry name" value="Knottin, scorpion toxin-like"/>
    <property type="match status" value="1"/>
</dbReference>
<dbReference type="InterPro" id="IPR036574">
    <property type="entry name" value="Scorpion_toxin-like_sf"/>
</dbReference>
<dbReference type="InterPro" id="IPR001947">
    <property type="entry name" value="Scorpion_toxinS_K_inh"/>
</dbReference>
<dbReference type="Pfam" id="PF00451">
    <property type="entry name" value="Toxin_2"/>
    <property type="match status" value="1"/>
</dbReference>
<dbReference type="PRINTS" id="PR00286">
    <property type="entry name" value="CHARYBDTOXIN"/>
</dbReference>
<dbReference type="SUPFAM" id="SSF57095">
    <property type="entry name" value="Scorpion toxin-like"/>
    <property type="match status" value="1"/>
</dbReference>
<dbReference type="PROSITE" id="PS01138">
    <property type="entry name" value="SCORP_SHORT_TOXIN"/>
    <property type="match status" value="1"/>
</dbReference>
<proteinExistence type="evidence at protein level"/>
<comment type="function">
    <text evidence="2">Inhibitor of voltage-gated potassium channels.</text>
</comment>
<comment type="subcellular location">
    <subcellularLocation>
        <location evidence="3">Secreted</location>
    </subcellularLocation>
</comment>
<comment type="tissue specificity">
    <text evidence="7">Expressed by the venom gland.</text>
</comment>
<comment type="domain">
    <text evidence="6">Has the structural arrangement of an alpha-helix connected to antiparallel beta-sheets by disulfide bonds (CS-alpha/beta).</text>
</comment>
<comment type="mass spectrometry" mass="3944.89" error="1.0" method="Electrospray" evidence="3"/>
<comment type="similarity">
    <text evidence="6">Belongs to the short scorpion toxin superfamily. Potassium channel inhibitor family. Alpha-KTx 02 subfamily.</text>
</comment>
<comment type="caution">
    <text evidence="8">According to mail exchange with L.D. Possani, the recommended name of this toxin has been updated to alpha-KTx 2.19, since alpha-KTx 2.15 is already used for Toxin II.10.5 (AC C0HJW1).</text>
</comment>
<reference key="1">
    <citation type="journal article" date="2015" name="Toxicon">
        <title>Comparative proteomic analysis of male and female venoms from the Cuban scorpion Rhopalurus junceus.</title>
        <authorList>
            <person name="Rodriguez-Ravelo R."/>
            <person name="Batista C.V."/>
            <person name="Coronas F.I."/>
            <person name="Zamudio F.Z."/>
            <person name="Hernandez-Orihuela L."/>
            <person name="Espinosa-Lopez G."/>
            <person name="Ruiz-Urquiola A."/>
            <person name="Possani L.D."/>
        </authorList>
    </citation>
    <scope>PROTEIN SEQUENCE</scope>
    <scope>SUBCELLULAR LOCATION</scope>
    <scope>MASS SPECTROMETRY</scope>
    <source>
        <tissue>Venom</tissue>
    </source>
</reference>
<reference key="2">
    <citation type="submission" date="2017-11" db="UniProtKB">
        <authorList>
            <person name="Possani L.D."/>
        </authorList>
    </citation>
    <scope>NOMENCLATURE</scope>
</reference>
<name>KAX2J_RHOJU</name>
<accession>C0HJT0</accession>